<sequence>MKAAYTAYRCLTKDLEGCAMNPELTMESLGTLHGPVGGGSGGGGGGGGGGGGGGPGHEQELLASPSPHHAGRGAAGSLRGPPPPTAHQELGTAAAAAAAASRSAMVTSMASILDGSDYRPELSIPLHHAMSMSCDSSPPGMGMSNTYTTLTPLQPLPPISTVSDKFHHPHPHHHPHHHHHHHHHHQRLSGNVSGSFTLMRDERGLPSMNNLYSPYKEMPSMSQSLSPLAATPLGNGLGGLHNAQQSLPNYGPPGHDKMLSPNFDAHHTAMLTRGEQHLSRGLGTPPAAMMSHLNGLHHPGHTQSHGPVLAPSRERPPSSSSGSQVATSGQLEEINTKEVAQRITAELKRYSIPQAIFAQRVLCRSQGTLSDLLRNPKPWSKLKSGRETFRRMWKWLQEPEFQRMSALRLAACKRKEQEPNKDRNNSQKKSRLVFTDLQRRTLFAIFKENKRPSKEMQITISQQLGLELTTVSNFFMNARRRSLEKWQDDLGTGGSSSTSSTCTKA</sequence>
<dbReference type="EMBL" id="AY242995">
    <property type="protein sequence ID" value="AAP69907.1"/>
    <property type="status" value="ALT_INIT"/>
    <property type="molecule type" value="mRNA"/>
</dbReference>
<dbReference type="EMBL" id="AC102106">
    <property type="status" value="NOT_ANNOTATED_CDS"/>
    <property type="molecule type" value="Genomic_DNA"/>
</dbReference>
<dbReference type="CCDS" id="CCDS29302.2"/>
<dbReference type="RefSeq" id="NP_919244.2">
    <property type="nucleotide sequence ID" value="NM_194268.3"/>
</dbReference>
<dbReference type="SMR" id="Q6XBJ3"/>
<dbReference type="BioGRID" id="230411">
    <property type="interactions" value="1"/>
</dbReference>
<dbReference type="FunCoup" id="Q6XBJ3">
    <property type="interactions" value="1432"/>
</dbReference>
<dbReference type="STRING" id="10090.ENSMUSP00000135692"/>
<dbReference type="PhosphoSitePlus" id="Q6XBJ3"/>
<dbReference type="jPOST" id="Q6XBJ3"/>
<dbReference type="PaxDb" id="10090-ENSMUSP00000110798"/>
<dbReference type="ProteomicsDB" id="289990"/>
<dbReference type="Antibodypedia" id="5415">
    <property type="antibodies" value="145 antibodies from 22 providers"/>
</dbReference>
<dbReference type="DNASU" id="225631"/>
<dbReference type="Ensembl" id="ENSMUST00000175965.10">
    <property type="protein sequence ID" value="ENSMUSP00000135692.3"/>
    <property type="gene ID" value="ENSMUSG00000045991.20"/>
</dbReference>
<dbReference type="GeneID" id="225631"/>
<dbReference type="KEGG" id="mmu:225631"/>
<dbReference type="UCSC" id="uc008fef.1">
    <property type="organism name" value="mouse"/>
</dbReference>
<dbReference type="AGR" id="MGI:1891408"/>
<dbReference type="CTD" id="9480"/>
<dbReference type="MGI" id="MGI:1891408">
    <property type="gene designation" value="Onecut2"/>
</dbReference>
<dbReference type="VEuPathDB" id="HostDB:ENSMUSG00000045991"/>
<dbReference type="eggNOG" id="KOG2252">
    <property type="taxonomic scope" value="Eukaryota"/>
</dbReference>
<dbReference type="GeneTree" id="ENSGT00950000183103"/>
<dbReference type="InParanoid" id="Q6XBJ3"/>
<dbReference type="OMA" id="YKDHMSG"/>
<dbReference type="OrthoDB" id="10068888at2759"/>
<dbReference type="PhylomeDB" id="Q6XBJ3"/>
<dbReference type="TreeFam" id="TF318206"/>
<dbReference type="BioGRID-ORCS" id="225631">
    <property type="hits" value="5 hits in 80 CRISPR screens"/>
</dbReference>
<dbReference type="ChiTaRS" id="Onecut2">
    <property type="organism name" value="mouse"/>
</dbReference>
<dbReference type="PRO" id="PR:Q6XBJ3"/>
<dbReference type="Proteomes" id="UP000000589">
    <property type="component" value="Chromosome 18"/>
</dbReference>
<dbReference type="RNAct" id="Q6XBJ3">
    <property type="molecule type" value="protein"/>
</dbReference>
<dbReference type="Bgee" id="ENSMUSG00000045991">
    <property type="expression patterns" value="Expressed in lumbar dorsal root ganglion and 104 other cell types or tissues"/>
</dbReference>
<dbReference type="GO" id="GO:0015629">
    <property type="term" value="C:actin cytoskeleton"/>
    <property type="evidence" value="ECO:0007669"/>
    <property type="project" value="Ensembl"/>
</dbReference>
<dbReference type="GO" id="GO:0005654">
    <property type="term" value="C:nucleoplasm"/>
    <property type="evidence" value="ECO:0007669"/>
    <property type="project" value="Ensembl"/>
</dbReference>
<dbReference type="GO" id="GO:0005634">
    <property type="term" value="C:nucleus"/>
    <property type="evidence" value="ECO:0000305"/>
    <property type="project" value="MGI"/>
</dbReference>
<dbReference type="GO" id="GO:0001228">
    <property type="term" value="F:DNA-binding transcription activator activity, RNA polymerase II-specific"/>
    <property type="evidence" value="ECO:0007669"/>
    <property type="project" value="Ensembl"/>
</dbReference>
<dbReference type="GO" id="GO:0003700">
    <property type="term" value="F:DNA-binding transcription factor activity"/>
    <property type="evidence" value="ECO:0000314"/>
    <property type="project" value="MGI"/>
</dbReference>
<dbReference type="GO" id="GO:0000978">
    <property type="term" value="F:RNA polymerase II cis-regulatory region sequence-specific DNA binding"/>
    <property type="evidence" value="ECO:0000314"/>
    <property type="project" value="MGI"/>
</dbReference>
<dbReference type="GO" id="GO:0009653">
    <property type="term" value="P:anatomical structure morphogenesis"/>
    <property type="evidence" value="ECO:0000315"/>
    <property type="project" value="MGI"/>
</dbReference>
<dbReference type="GO" id="GO:0045165">
    <property type="term" value="P:cell fate commitment"/>
    <property type="evidence" value="ECO:0000316"/>
    <property type="project" value="MGI"/>
</dbReference>
<dbReference type="GO" id="GO:0016477">
    <property type="term" value="P:cell migration"/>
    <property type="evidence" value="ECO:0000316"/>
    <property type="project" value="MGI"/>
</dbReference>
<dbReference type="GO" id="GO:0060271">
    <property type="term" value="P:cilium assembly"/>
    <property type="evidence" value="ECO:0000315"/>
    <property type="project" value="MGI"/>
</dbReference>
<dbReference type="GO" id="GO:0031018">
    <property type="term" value="P:endocrine pancreas development"/>
    <property type="evidence" value="ECO:0000316"/>
    <property type="project" value="MGI"/>
</dbReference>
<dbReference type="GO" id="GO:0002064">
    <property type="term" value="P:epithelial cell development"/>
    <property type="evidence" value="ECO:0000315"/>
    <property type="project" value="MGI"/>
</dbReference>
<dbReference type="GO" id="GO:0001889">
    <property type="term" value="P:liver development"/>
    <property type="evidence" value="ECO:0000316"/>
    <property type="project" value="MGI"/>
</dbReference>
<dbReference type="GO" id="GO:1905319">
    <property type="term" value="P:mesenchymal stem cell migration"/>
    <property type="evidence" value="ECO:0000316"/>
    <property type="project" value="MGI"/>
</dbReference>
<dbReference type="GO" id="GO:0030512">
    <property type="term" value="P:negative regulation of transforming growth factor beta receptor signaling pathway"/>
    <property type="evidence" value="ECO:0000316"/>
    <property type="project" value="MGI"/>
</dbReference>
<dbReference type="GO" id="GO:0031016">
    <property type="term" value="P:pancreas development"/>
    <property type="evidence" value="ECO:0000316"/>
    <property type="project" value="MGI"/>
</dbReference>
<dbReference type="GO" id="GO:0048935">
    <property type="term" value="P:peripheral nervous system neuron development"/>
    <property type="evidence" value="ECO:0000315"/>
    <property type="project" value="MGI"/>
</dbReference>
<dbReference type="GO" id="GO:1905322">
    <property type="term" value="P:positive regulation of mesenchymal stem cell migration"/>
    <property type="evidence" value="ECO:0000316"/>
    <property type="project" value="MGI"/>
</dbReference>
<dbReference type="GO" id="GO:0045944">
    <property type="term" value="P:positive regulation of transcription by RNA polymerase II"/>
    <property type="evidence" value="ECO:0000314"/>
    <property type="project" value="MGI"/>
</dbReference>
<dbReference type="GO" id="GO:0001952">
    <property type="term" value="P:regulation of cell-matrix adhesion"/>
    <property type="evidence" value="ECO:0000316"/>
    <property type="project" value="MGI"/>
</dbReference>
<dbReference type="GO" id="GO:0007179">
    <property type="term" value="P:transforming growth factor beta receptor signaling pathway"/>
    <property type="evidence" value="ECO:0000316"/>
    <property type="project" value="MGI"/>
</dbReference>
<dbReference type="CDD" id="cd00086">
    <property type="entry name" value="homeodomain"/>
    <property type="match status" value="1"/>
</dbReference>
<dbReference type="FunFam" id="1.10.10.60:FF:000054">
    <property type="entry name" value="One cut domain family member"/>
    <property type="match status" value="1"/>
</dbReference>
<dbReference type="FunFam" id="1.10.260.40:FF:000005">
    <property type="entry name" value="One cut domain family member"/>
    <property type="match status" value="1"/>
</dbReference>
<dbReference type="Gene3D" id="1.10.10.60">
    <property type="entry name" value="Homeodomain-like"/>
    <property type="match status" value="1"/>
</dbReference>
<dbReference type="Gene3D" id="1.10.260.40">
    <property type="entry name" value="lambda repressor-like DNA-binding domains"/>
    <property type="match status" value="1"/>
</dbReference>
<dbReference type="InterPro" id="IPR003350">
    <property type="entry name" value="CUT_dom"/>
</dbReference>
<dbReference type="InterPro" id="IPR051649">
    <property type="entry name" value="CUT_Homeobox"/>
</dbReference>
<dbReference type="InterPro" id="IPR001356">
    <property type="entry name" value="HD"/>
</dbReference>
<dbReference type="InterPro" id="IPR009057">
    <property type="entry name" value="Homeodomain-like_sf"/>
</dbReference>
<dbReference type="InterPro" id="IPR010982">
    <property type="entry name" value="Lambda_DNA-bd_dom_sf"/>
</dbReference>
<dbReference type="PANTHER" id="PTHR14057:SF10">
    <property type="entry name" value="ONE CUT DOMAIN FAMILY MEMBER 2"/>
    <property type="match status" value="1"/>
</dbReference>
<dbReference type="PANTHER" id="PTHR14057">
    <property type="entry name" value="TRANSCRIPTION FACTOR ONECUT"/>
    <property type="match status" value="1"/>
</dbReference>
<dbReference type="Pfam" id="PF02376">
    <property type="entry name" value="CUT"/>
    <property type="match status" value="1"/>
</dbReference>
<dbReference type="Pfam" id="PF00046">
    <property type="entry name" value="Homeodomain"/>
    <property type="match status" value="1"/>
</dbReference>
<dbReference type="SMART" id="SM01109">
    <property type="entry name" value="CUT"/>
    <property type="match status" value="1"/>
</dbReference>
<dbReference type="SMART" id="SM00389">
    <property type="entry name" value="HOX"/>
    <property type="match status" value="1"/>
</dbReference>
<dbReference type="SUPFAM" id="SSF46689">
    <property type="entry name" value="Homeodomain-like"/>
    <property type="match status" value="1"/>
</dbReference>
<dbReference type="SUPFAM" id="SSF47413">
    <property type="entry name" value="lambda repressor-like DNA-binding domains"/>
    <property type="match status" value="1"/>
</dbReference>
<dbReference type="PROSITE" id="PS51042">
    <property type="entry name" value="CUT"/>
    <property type="match status" value="1"/>
</dbReference>
<dbReference type="PROSITE" id="PS50071">
    <property type="entry name" value="HOMEOBOX_2"/>
    <property type="match status" value="1"/>
</dbReference>
<keyword id="KW-0010">Activator</keyword>
<keyword id="KW-0238">DNA-binding</keyword>
<keyword id="KW-0371">Homeobox</keyword>
<keyword id="KW-0539">Nucleus</keyword>
<keyword id="KW-1185">Reference proteome</keyword>
<keyword id="KW-0804">Transcription</keyword>
<keyword id="KW-0805">Transcription regulation</keyword>
<name>ONEC2_MOUSE</name>
<organism>
    <name type="scientific">Mus musculus</name>
    <name type="common">Mouse</name>
    <dbReference type="NCBI Taxonomy" id="10090"/>
    <lineage>
        <taxon>Eukaryota</taxon>
        <taxon>Metazoa</taxon>
        <taxon>Chordata</taxon>
        <taxon>Craniata</taxon>
        <taxon>Vertebrata</taxon>
        <taxon>Euteleostomi</taxon>
        <taxon>Mammalia</taxon>
        <taxon>Eutheria</taxon>
        <taxon>Euarchontoglires</taxon>
        <taxon>Glires</taxon>
        <taxon>Rodentia</taxon>
        <taxon>Myomorpha</taxon>
        <taxon>Muroidea</taxon>
        <taxon>Muridae</taxon>
        <taxon>Murinae</taxon>
        <taxon>Mus</taxon>
        <taxon>Mus</taxon>
    </lineage>
</organism>
<accession>Q6XBJ3</accession>
<protein>
    <recommendedName>
        <fullName>One cut domain family member 2</fullName>
    </recommendedName>
    <alternativeName>
        <fullName>One cut homeobox 2</fullName>
    </alternativeName>
    <alternativeName>
        <fullName>Transcription factor ONECUT-2</fullName>
        <shortName>OC-2</shortName>
    </alternativeName>
</protein>
<proteinExistence type="evidence at transcript level"/>
<comment type="function">
    <text evidence="1">Transcriptional activator. Activates the transcription of a number of liver genes such as HNF3B (By similarity).</text>
</comment>
<comment type="subcellular location">
    <subcellularLocation>
        <location>Nucleus</location>
    </subcellularLocation>
</comment>
<comment type="similarity">
    <text evidence="5">Belongs to the CUT homeobox family.</text>
</comment>
<comment type="caution">
    <text evidence="5">It is uncertain whether Met-1 or Met-20 is the initiator.</text>
</comment>
<comment type="sequence caution" evidence="5">
    <conflict type="erroneous initiation">
        <sequence resource="EMBL-CDS" id="AAP69907"/>
    </conflict>
</comment>
<reference key="1">
    <citation type="journal article" date="2003" name="Gene Expr. Patterns">
        <title>Cloning and embryonic expression pattern of the mouse Onecut transcription factor OC-2.</title>
        <authorList>
            <person name="Jacquemin P."/>
            <person name="Pierreux C.E."/>
            <person name="Fierens S."/>
            <person name="van Eyll J.M."/>
            <person name="Lemaigre F.P."/>
            <person name="Rousseau G.G."/>
        </authorList>
    </citation>
    <scope>NUCLEOTIDE SEQUENCE [MRNA]</scope>
    <source>
        <strain>C57BL/6 X CBA</strain>
    </source>
</reference>
<reference key="2">
    <citation type="journal article" date="2009" name="PLoS Biol.">
        <title>Lineage-specific biology revealed by a finished genome assembly of the mouse.</title>
        <authorList>
            <person name="Church D.M."/>
            <person name="Goodstadt L."/>
            <person name="Hillier L.W."/>
            <person name="Zody M.C."/>
            <person name="Goldstein S."/>
            <person name="She X."/>
            <person name="Bult C.J."/>
            <person name="Agarwala R."/>
            <person name="Cherry J.L."/>
            <person name="DiCuccio M."/>
            <person name="Hlavina W."/>
            <person name="Kapustin Y."/>
            <person name="Meric P."/>
            <person name="Maglott D."/>
            <person name="Birtle Z."/>
            <person name="Marques A.C."/>
            <person name="Graves T."/>
            <person name="Zhou S."/>
            <person name="Teague B."/>
            <person name="Potamousis K."/>
            <person name="Churas C."/>
            <person name="Place M."/>
            <person name="Herschleb J."/>
            <person name="Runnheim R."/>
            <person name="Forrest D."/>
            <person name="Amos-Landgraf J."/>
            <person name="Schwartz D.C."/>
            <person name="Cheng Z."/>
            <person name="Lindblad-Toh K."/>
            <person name="Eichler E.E."/>
            <person name="Ponting C.P."/>
        </authorList>
    </citation>
    <scope>NUCLEOTIDE SEQUENCE [LARGE SCALE GENOMIC DNA]</scope>
    <source>
        <strain>C57BL/6J</strain>
    </source>
</reference>
<evidence type="ECO:0000250" key="1"/>
<evidence type="ECO:0000255" key="2">
    <source>
        <dbReference type="PROSITE-ProRule" id="PRU00108"/>
    </source>
</evidence>
<evidence type="ECO:0000255" key="3">
    <source>
        <dbReference type="PROSITE-ProRule" id="PRU00374"/>
    </source>
</evidence>
<evidence type="ECO:0000256" key="4">
    <source>
        <dbReference type="SAM" id="MobiDB-lite"/>
    </source>
</evidence>
<evidence type="ECO:0000305" key="5"/>
<feature type="chain" id="PRO_0000202406" description="One cut domain family member 2">
    <location>
        <begin position="1"/>
        <end position="505"/>
    </location>
</feature>
<feature type="DNA-binding region" description="CUT" evidence="3">
    <location>
        <begin position="325"/>
        <end position="411"/>
    </location>
</feature>
<feature type="DNA-binding region" description="Homeobox" evidence="2">
    <location>
        <begin position="427"/>
        <end position="486"/>
    </location>
</feature>
<feature type="region of interest" description="Disordered" evidence="4">
    <location>
        <begin position="29"/>
        <end position="94"/>
    </location>
</feature>
<feature type="region of interest" description="Disordered" evidence="4">
    <location>
        <begin position="165"/>
        <end position="190"/>
    </location>
</feature>
<feature type="region of interest" description="Disordered" evidence="4">
    <location>
        <begin position="275"/>
        <end position="333"/>
    </location>
</feature>
<feature type="compositionally biased region" description="Gly residues" evidence="4">
    <location>
        <begin position="35"/>
        <end position="56"/>
    </location>
</feature>
<feature type="compositionally biased region" description="Basic residues" evidence="4">
    <location>
        <begin position="167"/>
        <end position="187"/>
    </location>
</feature>
<feature type="sequence conflict" description="In Ref. 1; AAP69907." evidence="5" ref="1">
    <original>T</original>
    <variation>A</variation>
    <location>
        <position position="151"/>
    </location>
</feature>
<gene>
    <name type="primary">Onecut2</name>
    <name type="synonym">Oc2</name>
</gene>